<comment type="function">
    <text evidence="1">Catalyzes the dephosphorylation of undecaprenyl diphosphate (UPP). Confers resistance to bacitracin.</text>
</comment>
<comment type="catalytic activity">
    <reaction evidence="1">
        <text>di-trans,octa-cis-undecaprenyl diphosphate + H2O = di-trans,octa-cis-undecaprenyl phosphate + phosphate + H(+)</text>
        <dbReference type="Rhea" id="RHEA:28094"/>
        <dbReference type="ChEBI" id="CHEBI:15377"/>
        <dbReference type="ChEBI" id="CHEBI:15378"/>
        <dbReference type="ChEBI" id="CHEBI:43474"/>
        <dbReference type="ChEBI" id="CHEBI:58405"/>
        <dbReference type="ChEBI" id="CHEBI:60392"/>
        <dbReference type="EC" id="3.6.1.27"/>
    </reaction>
</comment>
<comment type="subcellular location">
    <subcellularLocation>
        <location evidence="1">Cell inner membrane</location>
        <topology evidence="1">Multi-pass membrane protein</topology>
    </subcellularLocation>
</comment>
<comment type="miscellaneous">
    <text>Bacitracin is thought to be involved in the inhibition of peptidoglycan synthesis by sequestering undecaprenyl diphosphate, thereby reducing the pool of lipid carrier available.</text>
</comment>
<comment type="similarity">
    <text evidence="1">Belongs to the UppP family.</text>
</comment>
<dbReference type="EC" id="3.6.1.27" evidence="1"/>
<dbReference type="EMBL" id="CU928161">
    <property type="protein sequence ID" value="CAR04684.1"/>
    <property type="molecule type" value="Genomic_DNA"/>
</dbReference>
<dbReference type="SMR" id="B7MAD4"/>
<dbReference type="KEGG" id="ecz:ECS88_3455"/>
<dbReference type="HOGENOM" id="CLU_060296_2_0_6"/>
<dbReference type="Proteomes" id="UP000000747">
    <property type="component" value="Chromosome"/>
</dbReference>
<dbReference type="GO" id="GO:0005886">
    <property type="term" value="C:plasma membrane"/>
    <property type="evidence" value="ECO:0007669"/>
    <property type="project" value="UniProtKB-SubCell"/>
</dbReference>
<dbReference type="GO" id="GO:0050380">
    <property type="term" value="F:undecaprenyl-diphosphatase activity"/>
    <property type="evidence" value="ECO:0007669"/>
    <property type="project" value="UniProtKB-UniRule"/>
</dbReference>
<dbReference type="GO" id="GO:0071555">
    <property type="term" value="P:cell wall organization"/>
    <property type="evidence" value="ECO:0007669"/>
    <property type="project" value="UniProtKB-KW"/>
</dbReference>
<dbReference type="GO" id="GO:0009252">
    <property type="term" value="P:peptidoglycan biosynthetic process"/>
    <property type="evidence" value="ECO:0007669"/>
    <property type="project" value="UniProtKB-KW"/>
</dbReference>
<dbReference type="GO" id="GO:0008360">
    <property type="term" value="P:regulation of cell shape"/>
    <property type="evidence" value="ECO:0007669"/>
    <property type="project" value="UniProtKB-KW"/>
</dbReference>
<dbReference type="GO" id="GO:0046677">
    <property type="term" value="P:response to antibiotic"/>
    <property type="evidence" value="ECO:0007669"/>
    <property type="project" value="UniProtKB-UniRule"/>
</dbReference>
<dbReference type="HAMAP" id="MF_01006">
    <property type="entry name" value="Undec_diphosphatase"/>
    <property type="match status" value="1"/>
</dbReference>
<dbReference type="InterPro" id="IPR003824">
    <property type="entry name" value="UppP"/>
</dbReference>
<dbReference type="NCBIfam" id="NF001388">
    <property type="entry name" value="PRK00281.1-1"/>
    <property type="match status" value="1"/>
</dbReference>
<dbReference type="NCBIfam" id="NF001389">
    <property type="entry name" value="PRK00281.1-2"/>
    <property type="match status" value="1"/>
</dbReference>
<dbReference type="NCBIfam" id="NF001390">
    <property type="entry name" value="PRK00281.1-4"/>
    <property type="match status" value="1"/>
</dbReference>
<dbReference type="NCBIfam" id="TIGR00753">
    <property type="entry name" value="undec_PP_bacA"/>
    <property type="match status" value="1"/>
</dbReference>
<dbReference type="PANTHER" id="PTHR30622">
    <property type="entry name" value="UNDECAPRENYL-DIPHOSPHATASE"/>
    <property type="match status" value="1"/>
</dbReference>
<dbReference type="PANTHER" id="PTHR30622:SF3">
    <property type="entry name" value="UNDECAPRENYL-DIPHOSPHATASE"/>
    <property type="match status" value="1"/>
</dbReference>
<dbReference type="Pfam" id="PF02673">
    <property type="entry name" value="BacA"/>
    <property type="match status" value="1"/>
</dbReference>
<sequence length="273" mass="29773">MSDMHSLLIAAILGVVEGLTEFLPVSSTGHMIIVGHLLGFEGDTAKTFEVVIQLGSILAVVVMFWRRLFGLIGIHFGRPLQHEGESKGRLTLIHILLGMIPAVVLGLLFHDTIKSLFNPINVMYALVVGGLLLIAAECLKPKEPRAPGLDDMTYRQAFMIGCFQCLALWPGFSRSGATISGGMLMGVSRYAASEFSFLLAVPMMMGATALDLYKSWGFLTTGDIPMFAVGFITAFVVALIAIKTFLQLIKRISFIPFAIYRFIVAAAVYVVFF</sequence>
<organism>
    <name type="scientific">Escherichia coli O45:K1 (strain S88 / ExPEC)</name>
    <dbReference type="NCBI Taxonomy" id="585035"/>
    <lineage>
        <taxon>Bacteria</taxon>
        <taxon>Pseudomonadati</taxon>
        <taxon>Pseudomonadota</taxon>
        <taxon>Gammaproteobacteria</taxon>
        <taxon>Enterobacterales</taxon>
        <taxon>Enterobacteriaceae</taxon>
        <taxon>Escherichia</taxon>
    </lineage>
</organism>
<accession>B7MAD4</accession>
<reference key="1">
    <citation type="journal article" date="2009" name="PLoS Genet.">
        <title>Organised genome dynamics in the Escherichia coli species results in highly diverse adaptive paths.</title>
        <authorList>
            <person name="Touchon M."/>
            <person name="Hoede C."/>
            <person name="Tenaillon O."/>
            <person name="Barbe V."/>
            <person name="Baeriswyl S."/>
            <person name="Bidet P."/>
            <person name="Bingen E."/>
            <person name="Bonacorsi S."/>
            <person name="Bouchier C."/>
            <person name="Bouvet O."/>
            <person name="Calteau A."/>
            <person name="Chiapello H."/>
            <person name="Clermont O."/>
            <person name="Cruveiller S."/>
            <person name="Danchin A."/>
            <person name="Diard M."/>
            <person name="Dossat C."/>
            <person name="Karoui M.E."/>
            <person name="Frapy E."/>
            <person name="Garry L."/>
            <person name="Ghigo J.M."/>
            <person name="Gilles A.M."/>
            <person name="Johnson J."/>
            <person name="Le Bouguenec C."/>
            <person name="Lescat M."/>
            <person name="Mangenot S."/>
            <person name="Martinez-Jehanne V."/>
            <person name="Matic I."/>
            <person name="Nassif X."/>
            <person name="Oztas S."/>
            <person name="Petit M.A."/>
            <person name="Pichon C."/>
            <person name="Rouy Z."/>
            <person name="Ruf C.S."/>
            <person name="Schneider D."/>
            <person name="Tourret J."/>
            <person name="Vacherie B."/>
            <person name="Vallenet D."/>
            <person name="Medigue C."/>
            <person name="Rocha E.P.C."/>
            <person name="Denamur E."/>
        </authorList>
    </citation>
    <scope>NUCLEOTIDE SEQUENCE [LARGE SCALE GENOMIC DNA]</scope>
    <source>
        <strain>S88 / ExPEC</strain>
    </source>
</reference>
<proteinExistence type="inferred from homology"/>
<name>UPPP_ECO45</name>
<protein>
    <recommendedName>
        <fullName evidence="1">Undecaprenyl-diphosphatase</fullName>
        <ecNumber evidence="1">3.6.1.27</ecNumber>
    </recommendedName>
    <alternativeName>
        <fullName evidence="1">Bacitracin resistance protein</fullName>
    </alternativeName>
    <alternativeName>
        <fullName evidence="1">Undecaprenyl pyrophosphate phosphatase</fullName>
    </alternativeName>
</protein>
<feature type="chain" id="PRO_1000197369" description="Undecaprenyl-diphosphatase">
    <location>
        <begin position="1"/>
        <end position="273"/>
    </location>
</feature>
<feature type="transmembrane region" description="Helical" evidence="1">
    <location>
        <begin position="6"/>
        <end position="26"/>
    </location>
</feature>
<feature type="transmembrane region" description="Helical" evidence="1">
    <location>
        <begin position="45"/>
        <end position="65"/>
    </location>
</feature>
<feature type="transmembrane region" description="Helical" evidence="1">
    <location>
        <begin position="90"/>
        <end position="110"/>
    </location>
</feature>
<feature type="transmembrane region" description="Helical" evidence="1">
    <location>
        <begin position="116"/>
        <end position="136"/>
    </location>
</feature>
<feature type="transmembrane region" description="Helical" evidence="1">
    <location>
        <begin position="190"/>
        <end position="210"/>
    </location>
</feature>
<feature type="transmembrane region" description="Helical" evidence="1">
    <location>
        <begin position="222"/>
        <end position="242"/>
    </location>
</feature>
<feature type="transmembrane region" description="Helical" evidence="1">
    <location>
        <begin position="252"/>
        <end position="272"/>
    </location>
</feature>
<keyword id="KW-0046">Antibiotic resistance</keyword>
<keyword id="KW-0997">Cell inner membrane</keyword>
<keyword id="KW-1003">Cell membrane</keyword>
<keyword id="KW-0133">Cell shape</keyword>
<keyword id="KW-0961">Cell wall biogenesis/degradation</keyword>
<keyword id="KW-0378">Hydrolase</keyword>
<keyword id="KW-0472">Membrane</keyword>
<keyword id="KW-0573">Peptidoglycan synthesis</keyword>
<keyword id="KW-1185">Reference proteome</keyword>
<keyword id="KW-0812">Transmembrane</keyword>
<keyword id="KW-1133">Transmembrane helix</keyword>
<evidence type="ECO:0000255" key="1">
    <source>
        <dbReference type="HAMAP-Rule" id="MF_01006"/>
    </source>
</evidence>
<gene>
    <name evidence="1" type="primary">uppP</name>
    <name type="ordered locus">ECS88_3455</name>
</gene>